<accession>Q68FS4</accession>
<organism>
    <name type="scientific">Rattus norvegicus</name>
    <name type="common">Rat</name>
    <dbReference type="NCBI Taxonomy" id="10116"/>
    <lineage>
        <taxon>Eukaryota</taxon>
        <taxon>Metazoa</taxon>
        <taxon>Chordata</taxon>
        <taxon>Craniata</taxon>
        <taxon>Vertebrata</taxon>
        <taxon>Euteleostomi</taxon>
        <taxon>Mammalia</taxon>
        <taxon>Eutheria</taxon>
        <taxon>Euarchontoglires</taxon>
        <taxon>Glires</taxon>
        <taxon>Rodentia</taxon>
        <taxon>Myomorpha</taxon>
        <taxon>Muroidea</taxon>
        <taxon>Muridae</taxon>
        <taxon>Murinae</taxon>
        <taxon>Rattus</taxon>
    </lineage>
</organism>
<keyword id="KW-0007">Acetylation</keyword>
<keyword id="KW-0024">Alternative initiation</keyword>
<keyword id="KW-0031">Aminopeptidase</keyword>
<keyword id="KW-0963">Cytoplasm</keyword>
<keyword id="KW-0903">Direct protein sequencing</keyword>
<keyword id="KW-0378">Hydrolase</keyword>
<keyword id="KW-0460">Magnesium</keyword>
<keyword id="KW-0464">Manganese</keyword>
<keyword id="KW-0479">Metal-binding</keyword>
<keyword id="KW-0597">Phosphoprotein</keyword>
<keyword id="KW-0645">Protease</keyword>
<keyword id="KW-1185">Reference proteome</keyword>
<keyword id="KW-0862">Zinc</keyword>
<gene>
    <name evidence="11" type="primary">Lap3</name>
</gene>
<sequence>MYLLPLPAAARVALRRLGVRGLWDRGLSTADMTKGLVLGIYSKDKDDDVPQFTSAGENFNKLVSGRLREMLNISGPPLKAGKTRTFYGLHQDFPSVVVVGLGKRSAGVDDQENWHEGKENIRAAVAAGCRQVQDLELPSVEVDPCGDAQAAAEGAVLGLYEYDDLKQKKKVAVSAKLHGSGDLEAWEKGVLFASGQNLARQLMESPANEMTPTRFAEVIEKNLKSASSKTEVHIRTKSWIEEQEMGSFLSVAKGSEEPPVFLEIHYTGSPNATEAPLVFVGKGITFDSGGISIKASANMDLMRADMGGAATICSAIVSAAKLNLPINIIGLAPLCENMPSGKANKPGDVVRARNGKTIQVDNTDAEGRLILADALCYAHTFNPKVIINAATLTGAMDVALGSGATGVFTNSSWLWNKLFEASVETGDRVWRMPLFEHYTRQVIDCQLADVNNLGKYRSAGACTAAAFLREFVTHTKWAHLDIAGVMTNKDEIPYLRKGMSGRPTRTLIEFLLRFSKDSS</sequence>
<feature type="chain" id="PRO_0000274146" description="Cytosol aminopeptidase">
    <location>
        <begin position="1"/>
        <end position="519"/>
    </location>
</feature>
<feature type="active site" evidence="1">
    <location>
        <position position="294"/>
    </location>
</feature>
<feature type="active site" evidence="1">
    <location>
        <position position="368"/>
    </location>
</feature>
<feature type="binding site" evidence="1">
    <location>
        <position position="202"/>
    </location>
    <ligand>
        <name>Zn(2+)</name>
        <dbReference type="ChEBI" id="CHEBI:29105"/>
        <label>3</label>
        <note>structural</note>
    </ligand>
</feature>
<feature type="binding site" evidence="1">
    <location>
        <position position="203"/>
    </location>
    <ligand>
        <name>Zn(2+)</name>
        <dbReference type="ChEBI" id="CHEBI:29105"/>
        <label>3</label>
        <note>structural</note>
    </ligand>
</feature>
<feature type="binding site" evidence="1">
    <location>
        <position position="282"/>
    </location>
    <ligand>
        <name>substrate</name>
    </ligand>
</feature>
<feature type="binding site" evidence="1">
    <location>
        <position position="282"/>
    </location>
    <ligand>
        <name>Zn(2+)</name>
        <dbReference type="ChEBI" id="CHEBI:29105"/>
        <label>2</label>
        <note>catalytic</note>
    </ligand>
</feature>
<feature type="binding site" evidence="1">
    <location>
        <position position="287"/>
    </location>
    <ligand>
        <name>Mg(2+)</name>
        <dbReference type="ChEBI" id="CHEBI:18420"/>
        <note>catalytic</note>
    </ligand>
</feature>
<feature type="binding site" evidence="1">
    <location>
        <position position="287"/>
    </location>
    <ligand>
        <name>substrate</name>
    </ligand>
</feature>
<feature type="binding site" evidence="1">
    <location>
        <position position="287"/>
    </location>
    <ligand>
        <name>Zn(2+)</name>
        <dbReference type="ChEBI" id="CHEBI:29105"/>
        <label>1</label>
        <note>catalytic</note>
    </ligand>
</feature>
<feature type="binding site" evidence="1">
    <location>
        <position position="287"/>
    </location>
    <ligand>
        <name>Zn(2+)</name>
        <dbReference type="ChEBI" id="CHEBI:29105"/>
        <label>2</label>
        <note>catalytic</note>
    </ligand>
</feature>
<feature type="binding site" evidence="1">
    <location>
        <position position="292"/>
    </location>
    <ligand>
        <name>substrate</name>
    </ligand>
</feature>
<feature type="binding site" evidence="1">
    <location>
        <position position="294"/>
    </location>
    <ligand>
        <name>substrate</name>
    </ligand>
</feature>
<feature type="binding site" evidence="1">
    <location>
        <position position="303"/>
    </location>
    <ligand>
        <name>Zn(2+)</name>
        <dbReference type="ChEBI" id="CHEBI:29105"/>
        <label>3</label>
        <note>structural</note>
    </ligand>
</feature>
<feature type="binding site" evidence="1">
    <location>
        <position position="305"/>
    </location>
    <ligand>
        <name>substrate</name>
    </ligand>
</feature>
<feature type="binding site" evidence="1">
    <location>
        <position position="305"/>
    </location>
    <ligand>
        <name>Zn(2+)</name>
        <dbReference type="ChEBI" id="CHEBI:29105"/>
        <label>2</label>
        <note>catalytic</note>
    </ligand>
</feature>
<feature type="binding site" evidence="1">
    <location>
        <position position="364"/>
    </location>
    <ligand>
        <name>Mg(2+)</name>
        <dbReference type="ChEBI" id="CHEBI:18420"/>
        <note>catalytic</note>
    </ligand>
</feature>
<feature type="binding site" evidence="1">
    <location>
        <position position="364"/>
    </location>
    <ligand>
        <name>substrate</name>
    </ligand>
</feature>
<feature type="binding site" evidence="1">
    <location>
        <position position="364"/>
    </location>
    <ligand>
        <name>Zn(2+)</name>
        <dbReference type="ChEBI" id="CHEBI:29105"/>
        <label>1</label>
        <note>catalytic</note>
    </ligand>
</feature>
<feature type="binding site" evidence="1">
    <location>
        <position position="366"/>
    </location>
    <ligand>
        <name>Mg(2+)</name>
        <dbReference type="ChEBI" id="CHEBI:18420"/>
        <note>catalytic</note>
    </ligand>
</feature>
<feature type="binding site" evidence="1">
    <location>
        <position position="366"/>
    </location>
    <ligand>
        <name>Zn(2+)</name>
        <dbReference type="ChEBI" id="CHEBI:29105"/>
        <label>1</label>
        <note>catalytic</note>
    </ligand>
</feature>
<feature type="binding site" evidence="1">
    <location>
        <position position="366"/>
    </location>
    <ligand>
        <name>Zn(2+)</name>
        <dbReference type="ChEBI" id="CHEBI:29105"/>
        <label>2</label>
        <note>catalytic</note>
    </ligand>
</feature>
<feature type="modified residue" description="Phosphoserine" evidence="12">
    <location>
        <position position="42"/>
    </location>
</feature>
<feature type="modified residue" description="N6-succinyllysine" evidence="4">
    <location>
        <position position="45"/>
    </location>
</feature>
<feature type="modified residue" description="Phosphoserine" evidence="12">
    <location>
        <position position="54"/>
    </location>
</feature>
<feature type="modified residue" description="N6-succinyllysine" evidence="4">
    <location>
        <position position="61"/>
    </location>
</feature>
<feature type="modified residue" description="N6-succinyllysine" evidence="4">
    <location>
        <position position="103"/>
    </location>
</feature>
<feature type="modified residue" description="Phosphoserine" evidence="4">
    <location>
        <position position="180"/>
    </location>
</feature>
<feature type="modified residue" description="Phosphoserine" evidence="2">
    <location>
        <position position="194"/>
    </location>
</feature>
<feature type="modified residue" description="N6-acetyllysine; alternate" evidence="2">
    <location>
        <position position="221"/>
    </location>
</feature>
<feature type="modified residue" description="N6-succinyllysine; alternate" evidence="4">
    <location>
        <position position="221"/>
    </location>
</feature>
<feature type="modified residue" description="Phosphoserine" evidence="2">
    <location>
        <position position="238"/>
    </location>
</feature>
<feature type="modified residue" description="N6-acetyllysine; alternate" evidence="4">
    <location>
        <position position="455"/>
    </location>
</feature>
<feature type="modified residue" description="N6-succinyllysine; alternate" evidence="4">
    <location>
        <position position="455"/>
    </location>
</feature>
<feature type="modified residue" description="N6-succinyllysine" evidence="4">
    <location>
        <position position="476"/>
    </location>
</feature>
<feature type="modified residue" description="N6-acetyllysine; alternate" evidence="4">
    <location>
        <position position="489"/>
    </location>
</feature>
<feature type="modified residue" description="N6-succinyllysine; alternate" evidence="4">
    <location>
        <position position="489"/>
    </location>
</feature>
<feature type="splice variant" id="VSP_022633" description="In isoform 2." evidence="8">
    <location>
        <begin position="1"/>
        <end position="31"/>
    </location>
</feature>
<evidence type="ECO:0000250" key="1">
    <source>
        <dbReference type="UniProtKB" id="P00727"/>
    </source>
</evidence>
<evidence type="ECO:0000250" key="2">
    <source>
        <dbReference type="UniProtKB" id="P28838"/>
    </source>
</evidence>
<evidence type="ECO:0000250" key="3">
    <source>
        <dbReference type="UniProtKB" id="P28839"/>
    </source>
</evidence>
<evidence type="ECO:0000250" key="4">
    <source>
        <dbReference type="UniProtKB" id="Q9CPY7"/>
    </source>
</evidence>
<evidence type="ECO:0000269" key="5">
    <source>
    </source>
</evidence>
<evidence type="ECO:0000269" key="6">
    <source>
    </source>
</evidence>
<evidence type="ECO:0000303" key="7">
    <source>
    </source>
</evidence>
<evidence type="ECO:0000305" key="8"/>
<evidence type="ECO:0000305" key="9">
    <source>
    </source>
</evidence>
<evidence type="ECO:0000305" key="10">
    <source>
    </source>
</evidence>
<evidence type="ECO:0000312" key="11">
    <source>
        <dbReference type="RGD" id="1307985"/>
    </source>
</evidence>
<evidence type="ECO:0007744" key="12">
    <source>
    </source>
</evidence>
<name>AMPL_RAT</name>
<reference key="1">
    <citation type="journal article" date="2004" name="Genome Res.">
        <title>The status, quality, and expansion of the NIH full-length cDNA project: the Mammalian Gene Collection (MGC).</title>
        <authorList>
            <consortium name="The MGC Project Team"/>
        </authorList>
    </citation>
    <scope>NUCLEOTIDE SEQUENCE [LARGE SCALE MRNA]</scope>
    <source>
        <tissue>Testis</tissue>
    </source>
</reference>
<reference key="2">
    <citation type="journal article" date="1980" name="Biochem. Biophys. Res. Commun.">
        <title>Brush border membrane hydrolysis of S-benzyl-cysteine-p-nitroanilide, and activity of aminopeptidase M.</title>
        <authorList>
            <person name="Rankin B.B."/>
            <person name="McIntyre T.M."/>
            <person name="Curthoys N.P."/>
        </authorList>
    </citation>
    <scope>FUNCTION</scope>
    <scope>CATALYTIC ACTIVITY</scope>
</reference>
<reference key="3">
    <citation type="submission" date="2007-04" db="UniProtKB">
        <authorList>
            <person name="Lubec G."/>
            <person name="Afjehi-Sadat L."/>
            <person name="Diao W."/>
        </authorList>
    </citation>
    <scope>PROTEIN SEQUENCE OF 69-79; 85-103; 189-200; 283-294; 322-342; 369-384; 441-455; 458-469; 477-496 AND 506-513</scope>
    <scope>IDENTIFICATION BY MASS SPECTROMETRY</scope>
    <source>
        <strain>Sprague-Dawley</strain>
        <tissue>Hippocampus</tissue>
        <tissue>Spinal cord</tissue>
    </source>
</reference>
<reference key="4">
    <citation type="journal article" date="2003" name="Biol. Chem.">
        <title>Identification of cytosolic leucyl aminopeptidase (EC 3.4.11.1) as the major cysteinylglycine-hydrolyzing activity in rat liver.</title>
        <authorList>
            <person name="Joesch C."/>
            <person name="Klotz L.O."/>
            <person name="Sies H."/>
        </authorList>
    </citation>
    <scope>FUNCTION</scope>
    <scope>CATALYTIC ACTIVITY</scope>
    <scope>ACTIVITY REGULATION</scope>
    <scope>SUBCELLULAR LOCATION</scope>
</reference>
<reference key="5">
    <citation type="journal article" date="2012" name="Nat. Commun.">
        <title>Quantitative maps of protein phosphorylation sites across 14 different rat organs and tissues.</title>
        <authorList>
            <person name="Lundby A."/>
            <person name="Secher A."/>
            <person name="Lage K."/>
            <person name="Nordsborg N.B."/>
            <person name="Dmytriyev A."/>
            <person name="Lundby C."/>
            <person name="Olsen J.V."/>
        </authorList>
    </citation>
    <scope>PHOSPHORYLATION [LARGE SCALE ANALYSIS] AT SER-42 AND SER-54</scope>
    <scope>IDENTIFICATION BY MASS SPECTROMETRY [LARGE SCALE ANALYSIS]</scope>
</reference>
<protein>
    <recommendedName>
        <fullName evidence="8">Cytosol aminopeptidase</fullName>
        <ecNumber evidence="5">3.4.11.1</ecNumber>
    </recommendedName>
    <alternativeName>
        <fullName evidence="9">Cysteinylglycine-S-conjugate dipeptidase</fullName>
        <ecNumber evidence="5">3.4.13.23</ecNumber>
    </alternativeName>
    <alternativeName>
        <fullName evidence="11">Leucine aminopeptidase 3</fullName>
        <shortName>LAP-3</shortName>
    </alternativeName>
    <alternativeName>
        <fullName evidence="7">Leucyl aminopeptidase</fullName>
        <shortName evidence="7">LAP</shortName>
    </alternativeName>
    <alternativeName>
        <fullName evidence="2">Peptidase S</fullName>
    </alternativeName>
    <alternativeName>
        <fullName evidence="3">Proline aminopeptidase</fullName>
        <ecNumber evidence="3">3.4.11.5</ecNumber>
    </alternativeName>
    <alternativeName>
        <fullName evidence="11">Prolyl aminopeptidase</fullName>
    </alternativeName>
</protein>
<proteinExistence type="evidence at protein level"/>
<comment type="function">
    <text evidence="1 5 6">Cytosolic metallopeptidase that catalyzes the removal of unsubstituted N-terminal hydrophobic amino acids from various peptides (PubMed:12675513, PubMed:6108111). The presence of Zn(2+) ions is essential for the peptidase activity, and the association with other cofactors can modulate the substrate spectificity of the enzyme (By similarity). For instance, in the presence of Mn(2+), it displays a specific Cys-Gly hydrolyzing activity of Cys-Gly-S-conjugates (By similarity). Involved in the metabolism of glutathione and in the degradation of glutathione S-conjugates, which may play a role in the control of the cell redox status (PubMed:12675513).</text>
</comment>
<comment type="catalytic activity">
    <reaction evidence="5">
        <text>Release of an N-terminal amino acid, Xaa-|-Yaa-, in which Xaa is preferably Leu, but may be other amino acids including Pro although not Arg or Lys, and Yaa may be Pro. Amino acid amides and methyl esters are also readily hydrolyzed, but rates on arylamides are exceedingly low.</text>
        <dbReference type="EC" id="3.4.11.1"/>
    </reaction>
</comment>
<comment type="catalytic activity">
    <reaction evidence="5">
        <text>an S-substituted L-cysteinylglycine + H2O = an S-substituted L-cysteine + glycine</text>
        <dbReference type="Rhea" id="RHEA:60444"/>
        <dbReference type="ChEBI" id="CHEBI:15377"/>
        <dbReference type="ChEBI" id="CHEBI:57305"/>
        <dbReference type="ChEBI" id="CHEBI:58717"/>
        <dbReference type="ChEBI" id="CHEBI:143103"/>
        <dbReference type="EC" id="3.4.13.23"/>
    </reaction>
    <physiologicalReaction direction="left-to-right" evidence="9">
        <dbReference type="Rhea" id="RHEA:60445"/>
    </physiologicalReaction>
</comment>
<comment type="catalytic activity">
    <reaction evidence="5">
        <text>L-cysteinylglycine + H2O = L-cysteine + glycine</text>
        <dbReference type="Rhea" id="RHEA:28783"/>
        <dbReference type="ChEBI" id="CHEBI:15377"/>
        <dbReference type="ChEBI" id="CHEBI:35235"/>
        <dbReference type="ChEBI" id="CHEBI:57305"/>
        <dbReference type="ChEBI" id="CHEBI:61694"/>
    </reaction>
    <physiologicalReaction direction="left-to-right" evidence="9">
        <dbReference type="Rhea" id="RHEA:28784"/>
    </physiologicalReaction>
</comment>
<comment type="catalytic activity">
    <reaction evidence="6">
        <text>S-benzyl-L-cysteinylglycine + H2O = S-benzyl-L-cysteine + glycine</text>
        <dbReference type="Rhea" id="RHEA:62568"/>
        <dbReference type="ChEBI" id="CHEBI:15377"/>
        <dbReference type="ChEBI" id="CHEBI:57305"/>
        <dbReference type="ChEBI" id="CHEBI:145802"/>
        <dbReference type="ChEBI" id="CHEBI:145803"/>
    </reaction>
    <physiologicalReaction direction="left-to-right" evidence="10">
        <dbReference type="Rhea" id="RHEA:62569"/>
    </physiologicalReaction>
</comment>
<comment type="catalytic activity">
    <reaction evidence="3">
        <text>Release of N-terminal proline from a peptide.</text>
        <dbReference type="EC" id="3.4.11.5"/>
    </reaction>
</comment>
<comment type="cofactor">
    <cofactor evidence="1">
        <name>Zn(2+)</name>
        <dbReference type="ChEBI" id="CHEBI:29105"/>
    </cofactor>
    <cofactor evidence="1">
        <name>Mn(2+)</name>
        <dbReference type="ChEBI" id="CHEBI:29035"/>
    </cofactor>
    <text evidence="1">Binds two metal ions per subunit. Two metal binding sites with different affinities are located in the enzyme active site and can be occupied in vitro by different metals: site 1 is occupied by Zn(2+), Mn(2+), Mg(2+) or Co(2+), while the tight binding site 2 can be occupied by only Zn(2+) or Co(2+). One Zn(2+) ion is tightly bound to site 2 and essential for enzyme activity in vivo, while site 1 can be occupied by different metals to give different enzymatic activities. Mn(2+) is required for Cys-Gly hydrolysis activity. A third metal binding site may serve a structural role, possibly stabilizing part of the interface between the N-terminal and the catalytic domain.</text>
</comment>
<comment type="activity regulation">
    <text evidence="5">Bimane-S-cysteinylglycine-hydrolyzing activity is inhibited by o-phenanthroline or bestatin, and is activated by the addition of zinc chloride.</text>
</comment>
<comment type="biophysicochemical properties">
    <kinetics>
        <Vmax evidence="6">1.6 umol/min/mg enzyme for peptidase activity with S-benzyl-cysteine-p-nitroanilide</Vmax>
        <Vmax evidence="6">11.9 umol/min/mg enzyme for peptidase activity with Leucine-p-nitroanilide</Vmax>
        <Vmax evidence="6">9.4 umol/min/mg enzyme for peptidase activity with Alanine-p-nitroanilide</Vmax>
    </kinetics>
</comment>
<comment type="subunit">
    <text evidence="1">Homohexamer.</text>
</comment>
<comment type="subcellular location">
    <subcellularLocation>
        <location evidence="5">Cytoplasm</location>
    </subcellularLocation>
</comment>
<comment type="alternative products">
    <event type="alternative initiation"/>
    <isoform>
        <id>Q68FS4-1</id>
        <name>1</name>
        <sequence type="displayed"/>
    </isoform>
    <isoform>
        <id>Q68FS4-2</id>
        <name>2</name>
        <sequence type="described" ref="VSP_022633"/>
    </isoform>
</comment>
<comment type="similarity">
    <text evidence="8">Belongs to the peptidase M17 family.</text>
</comment>
<dbReference type="EC" id="3.4.11.1" evidence="5"/>
<dbReference type="EC" id="3.4.13.23" evidence="5"/>
<dbReference type="EC" id="3.4.11.5" evidence="3"/>
<dbReference type="EMBL" id="BC079381">
    <property type="protein sequence ID" value="AAH79381.1"/>
    <property type="molecule type" value="mRNA"/>
</dbReference>
<dbReference type="RefSeq" id="NP_001011910.1">
    <molecule id="Q68FS4-1"/>
    <property type="nucleotide sequence ID" value="NM_001011910.1"/>
</dbReference>
<dbReference type="SMR" id="Q68FS4"/>
<dbReference type="FunCoup" id="Q68FS4">
    <property type="interactions" value="1512"/>
</dbReference>
<dbReference type="STRING" id="10116.ENSRNOP00000004770"/>
<dbReference type="MEROPS" id="M17.001"/>
<dbReference type="GlyGen" id="Q68FS4">
    <property type="glycosylation" value="1 site, 1 O-linked glycan (1 site)"/>
</dbReference>
<dbReference type="iPTMnet" id="Q68FS4"/>
<dbReference type="PhosphoSitePlus" id="Q68FS4"/>
<dbReference type="jPOST" id="Q68FS4"/>
<dbReference type="PaxDb" id="10116-ENSRNOP00000004770"/>
<dbReference type="Ensembl" id="ENSRNOT00000004770.6">
    <molecule id="Q68FS4-1"/>
    <property type="protein sequence ID" value="ENSRNOP00000004770.3"/>
    <property type="gene ID" value="ENSRNOG00000003289.9"/>
</dbReference>
<dbReference type="GeneID" id="289668"/>
<dbReference type="KEGG" id="rno:289668"/>
<dbReference type="AGR" id="RGD:1307985"/>
<dbReference type="CTD" id="51056"/>
<dbReference type="RGD" id="1307985">
    <property type="gene designation" value="Lap3"/>
</dbReference>
<dbReference type="eggNOG" id="KOG2597">
    <property type="taxonomic scope" value="Eukaryota"/>
</dbReference>
<dbReference type="GeneTree" id="ENSGT00530000063255"/>
<dbReference type="HOGENOM" id="CLU_013734_1_2_1"/>
<dbReference type="InParanoid" id="Q68FS4"/>
<dbReference type="OMA" id="WPMPLPE"/>
<dbReference type="OrthoDB" id="412814at2759"/>
<dbReference type="PhylomeDB" id="Q68FS4"/>
<dbReference type="TreeFam" id="TF314954"/>
<dbReference type="BioCyc" id="MetaCyc:MONOMER-10001"/>
<dbReference type="BRENDA" id="3.4.13.23">
    <property type="organism ID" value="5301"/>
</dbReference>
<dbReference type="PRO" id="PR:Q68FS4"/>
<dbReference type="Proteomes" id="UP000002494">
    <property type="component" value="Chromosome 14"/>
</dbReference>
<dbReference type="Bgee" id="ENSRNOG00000003289">
    <property type="expression patterns" value="Expressed in jejunum and 19 other cell types or tissues"/>
</dbReference>
<dbReference type="GO" id="GO:0005737">
    <property type="term" value="C:cytoplasm"/>
    <property type="evidence" value="ECO:0000318"/>
    <property type="project" value="GO_Central"/>
</dbReference>
<dbReference type="GO" id="GO:0005802">
    <property type="term" value="C:trans-Golgi network"/>
    <property type="evidence" value="ECO:0000314"/>
    <property type="project" value="MGI"/>
</dbReference>
<dbReference type="GO" id="GO:0004180">
    <property type="term" value="F:carboxypeptidase activity"/>
    <property type="evidence" value="ECO:0007669"/>
    <property type="project" value="RHEA"/>
</dbReference>
<dbReference type="GO" id="GO:0030145">
    <property type="term" value="F:manganese ion binding"/>
    <property type="evidence" value="ECO:0007669"/>
    <property type="project" value="InterPro"/>
</dbReference>
<dbReference type="GO" id="GO:0070006">
    <property type="term" value="F:metalloaminopeptidase activity"/>
    <property type="evidence" value="ECO:0007669"/>
    <property type="project" value="InterPro"/>
</dbReference>
<dbReference type="GO" id="GO:0008233">
    <property type="term" value="F:peptidase activity"/>
    <property type="evidence" value="ECO:0000266"/>
    <property type="project" value="RGD"/>
</dbReference>
<dbReference type="GO" id="GO:0006508">
    <property type="term" value="P:proteolysis"/>
    <property type="evidence" value="ECO:0000318"/>
    <property type="project" value="GO_Central"/>
</dbReference>
<dbReference type="CDD" id="cd00433">
    <property type="entry name" value="Peptidase_M17"/>
    <property type="match status" value="1"/>
</dbReference>
<dbReference type="FunFam" id="3.40.220.10:FF:000005">
    <property type="entry name" value="cytosol aminopeptidase"/>
    <property type="match status" value="1"/>
</dbReference>
<dbReference type="FunFam" id="3.40.630.10:FF:000031">
    <property type="entry name" value="cytosol aminopeptidase"/>
    <property type="match status" value="1"/>
</dbReference>
<dbReference type="Gene3D" id="3.40.220.10">
    <property type="entry name" value="Leucine Aminopeptidase, subunit E, domain 1"/>
    <property type="match status" value="1"/>
</dbReference>
<dbReference type="Gene3D" id="3.40.630.10">
    <property type="entry name" value="Zn peptidases"/>
    <property type="match status" value="1"/>
</dbReference>
<dbReference type="HAMAP" id="MF_00181">
    <property type="entry name" value="Cytosol_peptidase_M17"/>
    <property type="match status" value="1"/>
</dbReference>
<dbReference type="InterPro" id="IPR011356">
    <property type="entry name" value="Leucine_aapep/pepB"/>
</dbReference>
<dbReference type="InterPro" id="IPR043472">
    <property type="entry name" value="Macro_dom-like"/>
</dbReference>
<dbReference type="InterPro" id="IPR000819">
    <property type="entry name" value="Peptidase_M17_C"/>
</dbReference>
<dbReference type="InterPro" id="IPR023042">
    <property type="entry name" value="Peptidase_M17_leu_NH2_pept"/>
</dbReference>
<dbReference type="InterPro" id="IPR008283">
    <property type="entry name" value="Peptidase_M17_N"/>
</dbReference>
<dbReference type="PANTHER" id="PTHR11963:SF23">
    <property type="entry name" value="CYTOSOL AMINOPEPTIDASE"/>
    <property type="match status" value="1"/>
</dbReference>
<dbReference type="PANTHER" id="PTHR11963">
    <property type="entry name" value="LEUCINE AMINOPEPTIDASE-RELATED"/>
    <property type="match status" value="1"/>
</dbReference>
<dbReference type="Pfam" id="PF00883">
    <property type="entry name" value="Peptidase_M17"/>
    <property type="match status" value="1"/>
</dbReference>
<dbReference type="Pfam" id="PF02789">
    <property type="entry name" value="Peptidase_M17_N"/>
    <property type="match status" value="1"/>
</dbReference>
<dbReference type="PRINTS" id="PR00481">
    <property type="entry name" value="LAMNOPPTDASE"/>
</dbReference>
<dbReference type="SUPFAM" id="SSF52949">
    <property type="entry name" value="Macro domain-like"/>
    <property type="match status" value="1"/>
</dbReference>
<dbReference type="SUPFAM" id="SSF53187">
    <property type="entry name" value="Zn-dependent exopeptidases"/>
    <property type="match status" value="1"/>
</dbReference>
<dbReference type="PROSITE" id="PS00631">
    <property type="entry name" value="CYTOSOL_AP"/>
    <property type="match status" value="1"/>
</dbReference>